<reference key="1">
    <citation type="journal article" date="2005" name="Plant Mol. Biol.">
        <title>The Medicago truncatula SUNN gene encodes a CLV1-like leucine-rich repeat receptor kinase that regulates nodule number and root length.</title>
        <authorList>
            <person name="Schnabel E."/>
            <person name="Journet E.P."/>
            <person name="de Carvalho-Niebel F."/>
            <person name="Duc G."/>
            <person name="Frugoli J."/>
        </authorList>
    </citation>
    <scope>NUCLEOTIDE SEQUENCE [GENOMIC DNA]</scope>
    <scope>FUNCTION</scope>
    <scope>TISSUE SPECIFICITY</scope>
    <scope>DISRUPTION PHENOTYPE</scope>
    <scope>MUTAGENESIS OF SER-575 AND ARG-950</scope>
</reference>
<reference key="2">
    <citation type="journal article" date="2011" name="Nature">
        <title>The Medicago genome provides insight into the evolution of rhizobial symbioses.</title>
        <authorList>
            <person name="Young N.D."/>
            <person name="Debelle F."/>
            <person name="Oldroyd G.E.D."/>
            <person name="Geurts R."/>
            <person name="Cannon S.B."/>
            <person name="Udvardi M.K."/>
            <person name="Benedito V.A."/>
            <person name="Mayer K.F.X."/>
            <person name="Gouzy J."/>
            <person name="Schoof H."/>
            <person name="Van de Peer Y."/>
            <person name="Proost S."/>
            <person name="Cook D.R."/>
            <person name="Meyers B.C."/>
            <person name="Spannagl M."/>
            <person name="Cheung F."/>
            <person name="De Mita S."/>
            <person name="Krishnakumar V."/>
            <person name="Gundlach H."/>
            <person name="Zhou S."/>
            <person name="Mudge J."/>
            <person name="Bharti A.K."/>
            <person name="Murray J.D."/>
            <person name="Naoumkina M.A."/>
            <person name="Rosen B."/>
            <person name="Silverstein K.A.T."/>
            <person name="Tang H."/>
            <person name="Rombauts S."/>
            <person name="Zhao P.X."/>
            <person name="Zhou P."/>
            <person name="Barbe V."/>
            <person name="Bardou P."/>
            <person name="Bechner M."/>
            <person name="Bellec A."/>
            <person name="Berger A."/>
            <person name="Berges H."/>
            <person name="Bidwell S."/>
            <person name="Bisseling T."/>
            <person name="Choisne N."/>
            <person name="Couloux A."/>
            <person name="Denny R."/>
            <person name="Deshpande S."/>
            <person name="Dai X."/>
            <person name="Doyle J.J."/>
            <person name="Dudez A.-M."/>
            <person name="Farmer A.D."/>
            <person name="Fouteau S."/>
            <person name="Franken C."/>
            <person name="Gibelin C."/>
            <person name="Gish J."/>
            <person name="Goldstein S."/>
            <person name="Gonzalez A.J."/>
            <person name="Green P.J."/>
            <person name="Hallab A."/>
            <person name="Hartog M."/>
            <person name="Hua A."/>
            <person name="Humphray S.J."/>
            <person name="Jeong D.-H."/>
            <person name="Jing Y."/>
            <person name="Jocker A."/>
            <person name="Kenton S.M."/>
            <person name="Kim D.-J."/>
            <person name="Klee K."/>
            <person name="Lai H."/>
            <person name="Lang C."/>
            <person name="Lin S."/>
            <person name="Macmil S.L."/>
            <person name="Magdelenat G."/>
            <person name="Matthews L."/>
            <person name="McCorrison J."/>
            <person name="Monaghan E.L."/>
            <person name="Mun J.-H."/>
            <person name="Najar F.Z."/>
            <person name="Nicholson C."/>
            <person name="Noirot C."/>
            <person name="O'Bleness M."/>
            <person name="Paule C.R."/>
            <person name="Poulain J."/>
            <person name="Prion F."/>
            <person name="Qin B."/>
            <person name="Qu C."/>
            <person name="Retzel E.F."/>
            <person name="Riddle C."/>
            <person name="Sallet E."/>
            <person name="Samain S."/>
            <person name="Samson N."/>
            <person name="Sanders I."/>
            <person name="Saurat O."/>
            <person name="Scarpelli C."/>
            <person name="Schiex T."/>
            <person name="Segurens B."/>
            <person name="Severin A.J."/>
            <person name="Sherrier D.J."/>
            <person name="Shi R."/>
            <person name="Sims S."/>
            <person name="Singer S.R."/>
            <person name="Sinharoy S."/>
            <person name="Sterck L."/>
            <person name="Viollet A."/>
            <person name="Wang B.-B."/>
            <person name="Wang K."/>
            <person name="Wang M."/>
            <person name="Wang X."/>
            <person name="Warfsmann J."/>
            <person name="Weissenbach J."/>
            <person name="White D.D."/>
            <person name="White J.D."/>
            <person name="Wiley G.B."/>
            <person name="Wincker P."/>
            <person name="Xing Y."/>
            <person name="Yang L."/>
            <person name="Yao Z."/>
            <person name="Ying F."/>
            <person name="Zhai J."/>
            <person name="Zhou L."/>
            <person name="Zuber A."/>
            <person name="Denarie J."/>
            <person name="Dixon R.A."/>
            <person name="May G.D."/>
            <person name="Schwartz D.C."/>
            <person name="Rogers J."/>
            <person name="Quetier F."/>
            <person name="Town C.D."/>
            <person name="Roe B.A."/>
        </authorList>
    </citation>
    <scope>NUCLEOTIDE SEQUENCE [LARGE SCALE GENOMIC DNA]</scope>
    <source>
        <strain>cv. Jemalong A17</strain>
    </source>
</reference>
<reference key="3">
    <citation type="journal article" date="2014" name="BMC Genomics">
        <title>An improved genome release (version Mt4.0) for the model legume Medicago truncatula.</title>
        <authorList>
            <person name="Tang H."/>
            <person name="Krishnakumar V."/>
            <person name="Bidwell S."/>
            <person name="Rosen B."/>
            <person name="Chan A."/>
            <person name="Zhou S."/>
            <person name="Gentzbittel L."/>
            <person name="Childs K.L."/>
            <person name="Yandell M."/>
            <person name="Gundlach H."/>
            <person name="Mayer K.F."/>
            <person name="Schwartz D.C."/>
            <person name="Town C.D."/>
        </authorList>
    </citation>
    <scope>GENOME REANNOTATION</scope>
    <source>
        <strain>cv. Jemalong A17</strain>
    </source>
</reference>
<reference key="4">
    <citation type="journal article" date="2018" name="Nat. Plants">
        <title>Whole-genome landscape of Medicago truncatula symbiotic genes.</title>
        <authorList>
            <person name="Pecrix Y."/>
            <person name="Staton S.E."/>
            <person name="Sallet E."/>
            <person name="Lelandais-Briere C."/>
            <person name="Moreau S."/>
            <person name="Carrere S."/>
            <person name="Blein T."/>
            <person name="Jardinaud M.F."/>
            <person name="Latrasse D."/>
            <person name="Zouine M."/>
            <person name="Zahm M."/>
            <person name="Kreplak J."/>
            <person name="Mayjonade B."/>
            <person name="Satge C."/>
            <person name="Perez M."/>
            <person name="Cauet S."/>
            <person name="Marande W."/>
            <person name="Chantry-Darmon C."/>
            <person name="Lopez-Roques C."/>
            <person name="Bouchez O."/>
            <person name="Berard A."/>
            <person name="Debelle F."/>
            <person name="Munos S."/>
            <person name="Bendahmane A."/>
            <person name="Berges H."/>
            <person name="Niebel A."/>
            <person name="Buitink J."/>
            <person name="Frugier F."/>
            <person name="Benhamed M."/>
            <person name="Crespi M."/>
            <person name="Gouzy J."/>
            <person name="Gamas P."/>
        </authorList>
    </citation>
    <scope>NUCLEOTIDE SEQUENCE [LARGE SCALE GENOMIC DNA]</scope>
    <source>
        <strain>cv. Jemalong A17</strain>
    </source>
</reference>
<reference key="5">
    <citation type="journal article" date="2006" name="Mol. Plant Microbe Interact.">
        <title>Mutations in DMI3 and SUNN modify the appressorium-responsive root proteome in arbuscular mycorrhiza.</title>
        <authorList>
            <person name="Amiour N."/>
            <person name="Recorbet G."/>
            <person name="Robert F."/>
            <person name="Gianinazzi S."/>
            <person name="Dumas-Gaudot E."/>
        </authorList>
    </citation>
    <scope>FUNCTION</scope>
    <scope>DISRUPTION PHENOTYPE</scope>
</reference>
<reference key="6">
    <citation type="journal article" date="2012" name="Plant J.">
        <title>Nodule numbers are governed by interaction between CLE peptides and cytokinin signaling.</title>
        <authorList>
            <person name="Mortier V."/>
            <person name="De Wever E."/>
            <person name="Vuylsteke M."/>
            <person name="Holsters M."/>
            <person name="Goormachtig S."/>
        </authorList>
    </citation>
    <scope>FUNCTION</scope>
    <scope>DISRUPTION PHENOTYPE</scope>
</reference>
<reference key="7">
    <citation type="journal article" date="2012" name="Plant Physiol.">
        <title>The autoregulation gene SUNN mediates changes in root organ formation in response to nitrogen through alteration of shoot-to-root auxin transport.</title>
        <authorList>
            <person name="Jin J."/>
            <person name="Watt M."/>
            <person name="Mathesius U."/>
        </authorList>
    </citation>
    <scope>FUNCTION</scope>
</reference>
<reference key="8">
    <citation type="journal article" date="2012" name="Plant Signal. Behav.">
        <title>The M. truncatula SUNN gene is expressed in vascular tissue, similarly to RDN1, consistent with the role of these nodulation regulation genes in long distance signaling.</title>
        <authorList>
            <person name="Schnabel E."/>
            <person name="Karve A."/>
            <person name="Kassaw T."/>
            <person name="Mukherjee A."/>
            <person name="Zhou X."/>
            <person name="Hall T."/>
            <person name="Frugoli J."/>
        </authorList>
    </citation>
    <scope>FUNCTION</scope>
    <scope>TISSUE SPECIFICITY</scope>
</reference>
<reference key="9">
    <citation type="journal article" date="2015" name="Plants (Basel)">
        <title>Multiple Autoregulation of Nodulation (AON) signals identified through split root analysis of Medicago truncatula sunn and rdn1 mutants.</title>
        <authorList>
            <person name="Kassaw T."/>
            <person name="Bridges W. Jr."/>
            <person name="Frugoli J."/>
        </authorList>
    </citation>
    <scope>FUNCTION</scope>
</reference>
<reference key="10">
    <citation type="journal article" date="2017" name="Plant Physiol.">
        <title>ROOT DETERMINED NODULATION1 is required for M. truncatula CLE12, but not CLE13, peptide signaling through the SUNN receptor kinase.</title>
        <authorList>
            <person name="Kassaw T."/>
            <person name="Nowak S."/>
            <person name="Schnabel E."/>
            <person name="Frugoli J."/>
        </authorList>
    </citation>
    <scope>FUNCTION</scope>
</reference>
<reference key="11">
    <citation type="journal article" date="2019" name="Nat. Plants">
        <title>A CLE-SUNN module regulates strigolactone content and fungal colonization in arbuscular mycorrhiza.</title>
        <authorList>
            <person name="Mueller L.M."/>
            <person name="Flokova K."/>
            <person name="Schnabel E."/>
            <person name="Sun X."/>
            <person name="Fei Z."/>
            <person name="Frugoli J."/>
            <person name="Bouwmeester H.J."/>
            <person name="Harrison M.J."/>
        </authorList>
    </citation>
    <scope>FUNCTION</scope>
</reference>
<keyword id="KW-0067">ATP-binding</keyword>
<keyword id="KW-1003">Cell membrane</keyword>
<keyword id="KW-0221">Differentiation</keyword>
<keyword id="KW-0325">Glycoprotein</keyword>
<keyword id="KW-0341">Growth regulation</keyword>
<keyword id="KW-0418">Kinase</keyword>
<keyword id="KW-0433">Leucine-rich repeat</keyword>
<keyword id="KW-0472">Membrane</keyword>
<keyword id="KW-0547">Nucleotide-binding</keyword>
<keyword id="KW-0675">Receptor</keyword>
<keyword id="KW-1185">Reference proteome</keyword>
<keyword id="KW-0677">Repeat</keyword>
<keyword id="KW-0723">Serine/threonine-protein kinase</keyword>
<keyword id="KW-0732">Signal</keyword>
<keyword id="KW-0808">Transferase</keyword>
<keyword id="KW-0812">Transmembrane</keyword>
<keyword id="KW-1133">Transmembrane helix</keyword>
<accession>G7JIK2</accession>
<accession>A0A396I6W1</accession>
<accession>Q4QVZ7</accession>
<protein>
    <recommendedName>
        <fullName evidence="13">Leucine-rich repeat receptor-like kinase protein SUNN</fullName>
        <ecNumber evidence="13">2.7.11.1</ecNumber>
    </recommendedName>
    <alternativeName>
        <fullName evidence="12">Protein SUPER NUMERIC NODULES</fullName>
    </alternativeName>
</protein>
<proteinExistence type="evidence at protein level"/>
<evidence type="ECO:0000255" key="1"/>
<evidence type="ECO:0000255" key="2">
    <source>
        <dbReference type="PROSITE-ProRule" id="PRU00159"/>
    </source>
</evidence>
<evidence type="ECO:0000255" key="3">
    <source>
        <dbReference type="PROSITE-ProRule" id="PRU00498"/>
    </source>
</evidence>
<evidence type="ECO:0000269" key="4">
    <source>
    </source>
</evidence>
<evidence type="ECO:0000269" key="5">
    <source>
    </source>
</evidence>
<evidence type="ECO:0000269" key="6">
    <source>
    </source>
</evidence>
<evidence type="ECO:0000269" key="7">
    <source>
    </source>
</evidence>
<evidence type="ECO:0000269" key="8">
    <source>
    </source>
</evidence>
<evidence type="ECO:0000269" key="9">
    <source>
    </source>
</evidence>
<evidence type="ECO:0000269" key="10">
    <source>
    </source>
</evidence>
<evidence type="ECO:0000269" key="11">
    <source>
    </source>
</evidence>
<evidence type="ECO:0000303" key="12">
    <source>
    </source>
</evidence>
<evidence type="ECO:0000305" key="13"/>
<evidence type="ECO:0000305" key="14">
    <source>
    </source>
</evidence>
<evidence type="ECO:0000305" key="15">
    <source>
    </source>
</evidence>
<evidence type="ECO:0000312" key="16">
    <source>
        <dbReference type="EMBL" id="AES89185.1"/>
    </source>
</evidence>
<evidence type="ECO:0000312" key="17">
    <source>
        <dbReference type="EMBL" id="RHN61330.1"/>
    </source>
</evidence>
<organism>
    <name type="scientific">Medicago truncatula</name>
    <name type="common">Barrel medic</name>
    <name type="synonym">Medicago tribuloides</name>
    <dbReference type="NCBI Taxonomy" id="3880"/>
    <lineage>
        <taxon>Eukaryota</taxon>
        <taxon>Viridiplantae</taxon>
        <taxon>Streptophyta</taxon>
        <taxon>Embryophyta</taxon>
        <taxon>Tracheophyta</taxon>
        <taxon>Spermatophyta</taxon>
        <taxon>Magnoliopsida</taxon>
        <taxon>eudicotyledons</taxon>
        <taxon>Gunneridae</taxon>
        <taxon>Pentapetalae</taxon>
        <taxon>rosids</taxon>
        <taxon>fabids</taxon>
        <taxon>Fabales</taxon>
        <taxon>Fabaceae</taxon>
        <taxon>Papilionoideae</taxon>
        <taxon>50 kb inversion clade</taxon>
        <taxon>NPAAA clade</taxon>
        <taxon>Hologalegina</taxon>
        <taxon>IRL clade</taxon>
        <taxon>Trifolieae</taxon>
        <taxon>Medicago</taxon>
    </lineage>
</organism>
<gene>
    <name evidence="12" type="primary">SUNN</name>
    <name evidence="16" type="ordered locus">MTR_4g070970</name>
    <name evidence="17" type="ORF">MtrunA17_Chr4g0035451</name>
</gene>
<dbReference type="EC" id="2.7.11.1" evidence="13"/>
<dbReference type="EMBL" id="AY769943">
    <property type="protein sequence ID" value="AAW71475.1"/>
    <property type="molecule type" value="Genomic_DNA"/>
</dbReference>
<dbReference type="EMBL" id="CM001220">
    <property type="protein sequence ID" value="AES89185.1"/>
    <property type="status" value="ALT_INIT"/>
    <property type="molecule type" value="Genomic_DNA"/>
</dbReference>
<dbReference type="EMBL" id="PSQE01000004">
    <property type="protein sequence ID" value="RHN61330.1"/>
    <property type="status" value="ALT_SEQ"/>
    <property type="molecule type" value="Genomic_DNA"/>
</dbReference>
<dbReference type="RefSeq" id="XP_003606988.1">
    <property type="nucleotide sequence ID" value="XM_003606940.2"/>
</dbReference>
<dbReference type="SMR" id="G7JIK2"/>
<dbReference type="STRING" id="3880.G7JIK2"/>
<dbReference type="GlyCosmos" id="G7JIK2">
    <property type="glycosylation" value="12 sites, No reported glycans"/>
</dbReference>
<dbReference type="PaxDb" id="3880-AES89185"/>
<dbReference type="GeneID" id="11439632"/>
<dbReference type="KEGG" id="mtr:11439632"/>
<dbReference type="eggNOG" id="ENOG502QQ4T">
    <property type="taxonomic scope" value="Eukaryota"/>
</dbReference>
<dbReference type="HOGENOM" id="CLU_000288_22_1_1"/>
<dbReference type="OrthoDB" id="676979at2759"/>
<dbReference type="Proteomes" id="UP000002051">
    <property type="component" value="Chromosome 4"/>
</dbReference>
<dbReference type="Proteomes" id="UP000265566">
    <property type="component" value="Chromosome 4"/>
</dbReference>
<dbReference type="ExpressionAtlas" id="G7JIK2">
    <property type="expression patterns" value="differential"/>
</dbReference>
<dbReference type="GO" id="GO:0016020">
    <property type="term" value="C:membrane"/>
    <property type="evidence" value="ECO:0000318"/>
    <property type="project" value="GO_Central"/>
</dbReference>
<dbReference type="GO" id="GO:0005886">
    <property type="term" value="C:plasma membrane"/>
    <property type="evidence" value="ECO:0007669"/>
    <property type="project" value="UniProtKB-SubCell"/>
</dbReference>
<dbReference type="GO" id="GO:0005524">
    <property type="term" value="F:ATP binding"/>
    <property type="evidence" value="ECO:0007669"/>
    <property type="project" value="UniProtKB-KW"/>
</dbReference>
<dbReference type="GO" id="GO:0106310">
    <property type="term" value="F:protein serine kinase activity"/>
    <property type="evidence" value="ECO:0007669"/>
    <property type="project" value="RHEA"/>
</dbReference>
<dbReference type="GO" id="GO:0004674">
    <property type="term" value="F:protein serine/threonine kinase activity"/>
    <property type="evidence" value="ECO:0007669"/>
    <property type="project" value="UniProtKB-KW"/>
</dbReference>
<dbReference type="GO" id="GO:0033612">
    <property type="term" value="F:receptor serine/threonine kinase binding"/>
    <property type="evidence" value="ECO:0000318"/>
    <property type="project" value="GO_Central"/>
</dbReference>
<dbReference type="GO" id="GO:0030154">
    <property type="term" value="P:cell differentiation"/>
    <property type="evidence" value="ECO:0007669"/>
    <property type="project" value="UniProtKB-KW"/>
</dbReference>
<dbReference type="FunFam" id="3.80.10.10:FF:000275">
    <property type="entry name" value="Leucine-rich repeat receptor-like protein kinase"/>
    <property type="match status" value="1"/>
</dbReference>
<dbReference type="FunFam" id="1.10.510.10:FF:000201">
    <property type="entry name" value="Leucine-rich repeat receptor-like serine/threonine-protein kinase"/>
    <property type="match status" value="1"/>
</dbReference>
<dbReference type="FunFam" id="3.30.200.20:FF:000292">
    <property type="entry name" value="Leucine-rich repeat receptor-like serine/threonine-protein kinase BAM1"/>
    <property type="match status" value="1"/>
</dbReference>
<dbReference type="FunFam" id="3.80.10.10:FF:000560">
    <property type="entry name" value="Leucine-rich repeat receptor-like serine/threonine-protein kinase BAM3"/>
    <property type="match status" value="1"/>
</dbReference>
<dbReference type="FunFam" id="3.80.10.10:FF:000288">
    <property type="entry name" value="LRR receptor-like serine/threonine-protein kinase EFR"/>
    <property type="match status" value="1"/>
</dbReference>
<dbReference type="Gene3D" id="3.30.200.20">
    <property type="entry name" value="Phosphorylase Kinase, domain 1"/>
    <property type="match status" value="1"/>
</dbReference>
<dbReference type="Gene3D" id="3.80.10.10">
    <property type="entry name" value="Ribonuclease Inhibitor"/>
    <property type="match status" value="4"/>
</dbReference>
<dbReference type="Gene3D" id="1.10.510.10">
    <property type="entry name" value="Transferase(Phosphotransferase) domain 1"/>
    <property type="match status" value="1"/>
</dbReference>
<dbReference type="InterPro" id="IPR011009">
    <property type="entry name" value="Kinase-like_dom_sf"/>
</dbReference>
<dbReference type="InterPro" id="IPR001611">
    <property type="entry name" value="Leu-rich_rpt"/>
</dbReference>
<dbReference type="InterPro" id="IPR003591">
    <property type="entry name" value="Leu-rich_rpt_typical-subtyp"/>
</dbReference>
<dbReference type="InterPro" id="IPR032675">
    <property type="entry name" value="LRR_dom_sf"/>
</dbReference>
<dbReference type="InterPro" id="IPR013210">
    <property type="entry name" value="LRR_N_plant-typ"/>
</dbReference>
<dbReference type="InterPro" id="IPR050647">
    <property type="entry name" value="Plant_LRR-RLKs"/>
</dbReference>
<dbReference type="InterPro" id="IPR000719">
    <property type="entry name" value="Prot_kinase_dom"/>
</dbReference>
<dbReference type="InterPro" id="IPR008271">
    <property type="entry name" value="Ser/Thr_kinase_AS"/>
</dbReference>
<dbReference type="PANTHER" id="PTHR48056">
    <property type="entry name" value="LRR RECEPTOR-LIKE SERINE/THREONINE-PROTEIN KINASE-RELATED"/>
    <property type="match status" value="1"/>
</dbReference>
<dbReference type="PANTHER" id="PTHR48056:SF44">
    <property type="entry name" value="RECEPTOR PROTEIN KINASE CLAVATA1"/>
    <property type="match status" value="1"/>
</dbReference>
<dbReference type="Pfam" id="PF00560">
    <property type="entry name" value="LRR_1"/>
    <property type="match status" value="7"/>
</dbReference>
<dbReference type="Pfam" id="PF13855">
    <property type="entry name" value="LRR_8"/>
    <property type="match status" value="1"/>
</dbReference>
<dbReference type="Pfam" id="PF08263">
    <property type="entry name" value="LRRNT_2"/>
    <property type="match status" value="1"/>
</dbReference>
<dbReference type="Pfam" id="PF00069">
    <property type="entry name" value="Pkinase"/>
    <property type="match status" value="1"/>
</dbReference>
<dbReference type="SMART" id="SM00369">
    <property type="entry name" value="LRR_TYP"/>
    <property type="match status" value="7"/>
</dbReference>
<dbReference type="SMART" id="SM00220">
    <property type="entry name" value="S_TKc"/>
    <property type="match status" value="1"/>
</dbReference>
<dbReference type="SUPFAM" id="SSF52058">
    <property type="entry name" value="L domain-like"/>
    <property type="match status" value="1"/>
</dbReference>
<dbReference type="SUPFAM" id="SSF56112">
    <property type="entry name" value="Protein kinase-like (PK-like)"/>
    <property type="match status" value="1"/>
</dbReference>
<dbReference type="SUPFAM" id="SSF52047">
    <property type="entry name" value="RNI-like"/>
    <property type="match status" value="1"/>
</dbReference>
<dbReference type="PROSITE" id="PS50011">
    <property type="entry name" value="PROTEIN_KINASE_DOM"/>
    <property type="match status" value="1"/>
</dbReference>
<dbReference type="PROSITE" id="PS00108">
    <property type="entry name" value="PROTEIN_KINASE_ST"/>
    <property type="match status" value="1"/>
</dbReference>
<feature type="signal peptide" evidence="1">
    <location>
        <begin position="1"/>
        <end position="20"/>
    </location>
</feature>
<feature type="chain" id="PRO_0000448628" description="Leucine-rich repeat receptor-like kinase protein SUNN" evidence="1">
    <location>
        <begin position="21"/>
        <end position="974"/>
    </location>
</feature>
<feature type="transmembrane region" description="Helical" evidence="1">
    <location>
        <begin position="635"/>
        <end position="655"/>
    </location>
</feature>
<feature type="repeat" description="LRR 1" evidence="1">
    <location>
        <begin position="92"/>
        <end position="116"/>
    </location>
</feature>
<feature type="repeat" description="LRR 2" evidence="1">
    <location>
        <begin position="117"/>
        <end position="141"/>
    </location>
</feature>
<feature type="repeat" description="LRR 3" evidence="1">
    <location>
        <begin position="143"/>
        <end position="165"/>
    </location>
</feature>
<feature type="repeat" description="LRR 4" evidence="1">
    <location>
        <begin position="166"/>
        <end position="188"/>
    </location>
</feature>
<feature type="repeat" description="LRR 5" evidence="1">
    <location>
        <begin position="189"/>
        <end position="213"/>
    </location>
</feature>
<feature type="repeat" description="LRR 6" evidence="1">
    <location>
        <begin position="238"/>
        <end position="262"/>
    </location>
</feature>
<feature type="repeat" description="LRR 7" evidence="1">
    <location>
        <begin position="263"/>
        <end position="286"/>
    </location>
</feature>
<feature type="repeat" description="LRR 8" evidence="1">
    <location>
        <begin position="288"/>
        <end position="309"/>
    </location>
</feature>
<feature type="repeat" description="LRR 9" evidence="1">
    <location>
        <begin position="310"/>
        <end position="334"/>
    </location>
</feature>
<feature type="repeat" description="LRR 10" evidence="1">
    <location>
        <begin position="335"/>
        <end position="358"/>
    </location>
</feature>
<feature type="repeat" description="LRR 11" evidence="1">
    <location>
        <begin position="360"/>
        <end position="382"/>
    </location>
</feature>
<feature type="repeat" description="LRR 12" evidence="1">
    <location>
        <begin position="383"/>
        <end position="406"/>
    </location>
</feature>
<feature type="repeat" description="LRR 13" evidence="1">
    <location>
        <begin position="407"/>
        <end position="430"/>
    </location>
</feature>
<feature type="repeat" description="LRR 14" evidence="1">
    <location>
        <begin position="431"/>
        <end position="454"/>
    </location>
</feature>
<feature type="repeat" description="LRR 15" evidence="1">
    <location>
        <begin position="456"/>
        <end position="477"/>
    </location>
</feature>
<feature type="repeat" description="LRR 16" evidence="1">
    <location>
        <begin position="478"/>
        <end position="501"/>
    </location>
</feature>
<feature type="repeat" description="LRR 17" evidence="1">
    <location>
        <begin position="503"/>
        <end position="525"/>
    </location>
</feature>
<feature type="repeat" description="LRR 18" evidence="1">
    <location>
        <begin position="527"/>
        <end position="549"/>
    </location>
</feature>
<feature type="repeat" description="LRR 19" evidence="1">
    <location>
        <begin position="550"/>
        <end position="573"/>
    </location>
</feature>
<feature type="repeat" description="LRR 20" evidence="1">
    <location>
        <begin position="574"/>
        <end position="598"/>
    </location>
</feature>
<feature type="domain" description="Protein kinase" evidence="2">
    <location>
        <begin position="685"/>
        <end position="972"/>
    </location>
</feature>
<feature type="active site" description="Proton acceptor" evidence="2">
    <location>
        <position position="810"/>
    </location>
</feature>
<feature type="binding site" evidence="2">
    <location>
        <begin position="691"/>
        <end position="699"/>
    </location>
    <ligand>
        <name>ATP</name>
        <dbReference type="ChEBI" id="CHEBI:30616"/>
    </ligand>
</feature>
<feature type="binding site" evidence="2">
    <location>
        <position position="713"/>
    </location>
    <ligand>
        <name>ATP</name>
        <dbReference type="ChEBI" id="CHEBI:30616"/>
    </ligand>
</feature>
<feature type="glycosylation site" description="N-linked (GlcNAc...) asparagine" evidence="3">
    <location>
        <position position="75"/>
    </location>
</feature>
<feature type="glycosylation site" description="N-linked (GlcNAc...) asparagine" evidence="3">
    <location>
        <position position="104"/>
    </location>
</feature>
<feature type="glycosylation site" description="N-linked (GlcNAc...) asparagine" evidence="3">
    <location>
        <position position="123"/>
    </location>
</feature>
<feature type="glycosylation site" description="N-linked (GlcNAc...) asparagine" evidence="3">
    <location>
        <position position="136"/>
    </location>
</feature>
<feature type="glycosylation site" description="N-linked (GlcNAc...) asparagine" evidence="3">
    <location>
        <position position="250"/>
    </location>
</feature>
<feature type="glycosylation site" description="N-linked (GlcNAc...) asparagine" evidence="3">
    <location>
        <position position="274"/>
    </location>
</feature>
<feature type="glycosylation site" description="N-linked (GlcNAc...) asparagine" evidence="3">
    <location>
        <position position="312"/>
    </location>
</feature>
<feature type="glycosylation site" description="N-linked (GlcNAc...) asparagine" evidence="3">
    <location>
        <position position="346"/>
    </location>
</feature>
<feature type="glycosylation site" description="N-linked (GlcNAc...) asparagine" evidence="3">
    <location>
        <position position="508"/>
    </location>
</feature>
<feature type="glycosylation site" description="N-linked (GlcNAc...) asparagine" evidence="3">
    <location>
        <position position="513"/>
    </location>
</feature>
<feature type="glycosylation site" description="N-linked (GlcNAc...) asparagine" evidence="3">
    <location>
        <position position="556"/>
    </location>
</feature>
<feature type="glycosylation site" description="N-linked (GlcNAc...) asparagine" evidence="3">
    <location>
        <position position="585"/>
    </location>
</feature>
<feature type="mutagenesis site" description="In sunn-2; dramatic increase in root nodule number when infected by Sinorhizobium meliloti, and inhibition of root growth in both the presence and absence of rhizobia." evidence="4">
    <original>S</original>
    <variation>R</variation>
    <location>
        <position position="575"/>
    </location>
</feature>
<feature type="mutagenesis site" description="In sunn-1; dramatic increase in root nodule number when infected by Sinorhizobium meliloti, and inhibition of root growth in both the presence and absence of rhizobia." evidence="4">
    <original>R</original>
    <variation>K</variation>
    <location>
        <position position="950"/>
    </location>
</feature>
<comment type="function">
    <text evidence="4 5 6 8 9 10 11 14 15">LRR receptor kinase involved in the regulation of root growth and root nodule organogenesis (PubMed:16240175, PubMed:16941903, PubMed:22399647). Involved in long distance nodulation signaling events (Probable) (PubMed:22399647). Involved in the autoregulation of nodulation (AON), a long distance systemic signaling from root to shoot and back again, which allows legumes to limit the number of root nodules formed based on available nitrogen and previous rhizobial colonization (Probable) (PubMed:27135324). Acts from shoot to root to control AON (PubMed:27135324, PubMed:28592666). Interacts with CLE12 and CLE13 signaling to control nodule numbers (PubMed:22168914). Required for the modulation of shoot-to-root auxin transport in response to altered nitrogen tissue concentrations and in the absence of rhizobia (PubMed:22399647). Shoot-to-root auxin transport influences lateral root density and length (PubMed:22399647). Involved in the regulation of root colonization by arbuscular mycorrhizal (AM) fungi (PubMed:16941903, PubMed:31477892). Interacts with CLE33 and CL53 signaling to repress strigolactone biosynthetic genes and strigolactone content in the roots, and consequently reduces the promotion of further colonization by AM fungi (PubMed:31477892).</text>
</comment>
<comment type="catalytic activity">
    <reaction evidence="13">
        <text>L-seryl-[protein] + ATP = O-phospho-L-seryl-[protein] + ADP + H(+)</text>
        <dbReference type="Rhea" id="RHEA:17989"/>
        <dbReference type="Rhea" id="RHEA-COMP:9863"/>
        <dbReference type="Rhea" id="RHEA-COMP:11604"/>
        <dbReference type="ChEBI" id="CHEBI:15378"/>
        <dbReference type="ChEBI" id="CHEBI:29999"/>
        <dbReference type="ChEBI" id="CHEBI:30616"/>
        <dbReference type="ChEBI" id="CHEBI:83421"/>
        <dbReference type="ChEBI" id="CHEBI:456216"/>
        <dbReference type="EC" id="2.7.11.1"/>
    </reaction>
    <physiologicalReaction direction="left-to-right" evidence="13">
        <dbReference type="Rhea" id="RHEA:17990"/>
    </physiologicalReaction>
</comment>
<comment type="catalytic activity">
    <reaction evidence="13">
        <text>L-threonyl-[protein] + ATP = O-phospho-L-threonyl-[protein] + ADP + H(+)</text>
        <dbReference type="Rhea" id="RHEA:46608"/>
        <dbReference type="Rhea" id="RHEA-COMP:11060"/>
        <dbReference type="Rhea" id="RHEA-COMP:11605"/>
        <dbReference type="ChEBI" id="CHEBI:15378"/>
        <dbReference type="ChEBI" id="CHEBI:30013"/>
        <dbReference type="ChEBI" id="CHEBI:30616"/>
        <dbReference type="ChEBI" id="CHEBI:61977"/>
        <dbReference type="ChEBI" id="CHEBI:456216"/>
        <dbReference type="EC" id="2.7.11.1"/>
    </reaction>
    <physiologicalReaction direction="left-to-right" evidence="13">
        <dbReference type="Rhea" id="RHEA:46609"/>
    </physiologicalReaction>
</comment>
<comment type="subcellular location">
    <subcellularLocation>
        <location evidence="13">Cell membrane</location>
        <topology evidence="13">Single-pass type I membrane protein</topology>
    </subcellularLocation>
</comment>
<comment type="tissue specificity">
    <text evidence="4 7">Expressed in roots and shoots (PubMed:16240175). Expressed in the vasculature of leaves, petioles, stems and roots (PubMed:22301956).</text>
</comment>
<comment type="disruption phenotype">
    <text evidence="4 5 6">Dramatic increase in root nodule number when inoculated with Sinorhizobium meliloti (PubMed:16240175, PubMed:16941903, PubMed:22168914). Inhibition of root growth in both the presence and absence of rhizobia (PubMed:16240175). Increase in arbuscular mycorrhizal (AM) fungus colonization intensity in roots (hypermycorrhizal phenotype) when inoculated with AM fungi (PubMed:16941903).</text>
</comment>
<comment type="similarity">
    <text evidence="2">Belongs to the protein kinase superfamily. Ser/Thr protein kinase family.</text>
</comment>
<comment type="sequence caution" evidence="13">
    <conflict type="erroneous initiation">
        <sequence resource="EMBL-CDS" id="AES89185"/>
    </conflict>
    <text>Truncated N-terminus.</text>
</comment>
<comment type="sequence caution" evidence="13">
    <conflict type="erroneous gene model prediction">
        <sequence resource="EMBL-CDS" id="RHN61330"/>
    </conflict>
</comment>
<sequence length="974" mass="107808">MKNITCYLLLLCMLFTTCYSLNNDLDALLKLKKSMKGEKAKDDALKDWKFSTSASAHCSFSGVKCDEDQRVIALNVTQVPLFGHLSKEIGELNMLESLTITMDNLTGELPTELSKLTSLRILNISHNLFSGNFPGNITFGMKKLEALDAYDNNFEGPLPEEIVSLMKLKYLSFAGNFFSGTIPESYSEFQKLEILRLNYNSLTGKIPKSLSKLKMLKELQLGYENAYSGGIPPELGSIKSLRYLEISNANLTGEIPPSLGNLENLDSLFLQMNNLTGTIPPELSSMRSLMSLDLSINGLSGEIPETFSKLKNLTLINFFQNKLRGSIPAFIGDLPNLETLQVWENNFSFVLPQNLGSNGKFIYFDVTKNHLTGLIPPELCKSKKLKTFIVTDNFFRGPIPNGIGPCKSLEKIRVANNYLDGPVPPGIFQLPSVQIIELGNNRFNGQLPTEISGNSLGNLALSNNLFTGRIPASMKNLRSLQTLLLDANQFLGEIPAEVFALPVLTRINISGNNLTGGIPKTVTQCSSLTAVDFSRNMLTGEVPKGMKNLKVLSIFNVSHNSISGKIPDEIRFMTSLTTLDLSYNNFTGIVPTGGQFLVFNDRSFAGNPSLCFPHQTTCSSLLYRSRKSHAKEKAVVIAIVFATAVLMVIVTLHMMRKRKRHMAKAWKLTAFQKLEFRAEEVVECLKEENIIGKGGAGIVYRGSMANGTDVAIKRLVGQGSGRNDYGFKAEIETLGRIRHRNIMRLLGYVSNKDTNLLLYEYMPNGSLGEWLHGAKGCHLSWEMRYKIAVEAAKGLCYLHHDCSPLIIHRDVKSNNILLDADFEAHVADFGLAKFLYDPGASQSMSSIAGSYGYIAPEYAYTLKVDEKSDVYSFGVVLLELIIGRKPVGEFGDGVDIVGWINKTELELYQPSDKALVSAVVDPRLNGYPLTSVIYMFNIAMMCVKEMGPARPTMREVVHMLTNPPHSTSHNLINL</sequence>
<name>SUNN_MEDTR</name>